<comment type="function">
    <text evidence="1">NDH-1 shuttles electrons from NAD(P)H, via FMN and iron-sulfur (Fe-S) centers, to quinones in the respiratory chain. The immediate electron acceptor for the enzyme in this species is believed to be plastoquinone. Couples the redox reaction to proton translocation (for every two electrons transferred, four hydrogen ions are translocated across the cytoplasmic membrane), and thus conserves the redox energy in a proton gradient.</text>
</comment>
<comment type="catalytic activity">
    <reaction evidence="1">
        <text>a plastoquinone + NADH + (n+1) H(+)(in) = a plastoquinol + NAD(+) + n H(+)(out)</text>
        <dbReference type="Rhea" id="RHEA:42608"/>
        <dbReference type="Rhea" id="RHEA-COMP:9561"/>
        <dbReference type="Rhea" id="RHEA-COMP:9562"/>
        <dbReference type="ChEBI" id="CHEBI:15378"/>
        <dbReference type="ChEBI" id="CHEBI:17757"/>
        <dbReference type="ChEBI" id="CHEBI:57540"/>
        <dbReference type="ChEBI" id="CHEBI:57945"/>
        <dbReference type="ChEBI" id="CHEBI:62192"/>
    </reaction>
</comment>
<comment type="catalytic activity">
    <reaction evidence="1">
        <text>a plastoquinone + NADPH + (n+1) H(+)(in) = a plastoquinol + NADP(+) + n H(+)(out)</text>
        <dbReference type="Rhea" id="RHEA:42612"/>
        <dbReference type="Rhea" id="RHEA-COMP:9561"/>
        <dbReference type="Rhea" id="RHEA-COMP:9562"/>
        <dbReference type="ChEBI" id="CHEBI:15378"/>
        <dbReference type="ChEBI" id="CHEBI:17757"/>
        <dbReference type="ChEBI" id="CHEBI:57783"/>
        <dbReference type="ChEBI" id="CHEBI:58349"/>
        <dbReference type="ChEBI" id="CHEBI:62192"/>
    </reaction>
</comment>
<comment type="subcellular location">
    <subcellularLocation>
        <location evidence="1">Cellular thylakoid membrane</location>
        <topology evidence="1">Multi-pass membrane protein</topology>
    </subcellularLocation>
</comment>
<comment type="similarity">
    <text evidence="1">Belongs to the complex I subunit 4 family.</text>
</comment>
<sequence length="534" mass="58645">MEIGTFPWLTTIILLPIVAALFIPLLPDRDGKGTTIRWYSLIVGLVDFILLVVAFWTSYDFSNPDLQLVESYAWVPQIGLNWSVGADGLSMPLILLTGFISTLAMLAAWPVTFKTRFFYFLMLAMYGGQILVFAVQDLLVFFFAWELELIPVYLLLAIWGGKRRQYAATKFILYTAGSSLFILVASLAMAFSGDVISFDFQTLAAKEYAIGFQLLLYAGFLIAYGVKLPIVPLHTWLPDAHGEATAPVHMLLAGILLKMGGYALFRMNAGMLPEAHARFAPILVLLGVVNILYAALTSFAQRNLKRKIAYSSISHMGFVLIGLGSFTQLGLSGSMLQMVSHGLIGASLFFLVGATYDRTHTLMLDEMGGVGQKMRKMFAMWTTCAMASLALPGMSGFVAELMVFVGFATSDAYGLPFKVVVISLAAIGVILTPIYLLSMLREIFFGPENKTLTEHETLVDAEPREVYIIACLLVPIIGIGLYPKLTTQVYDATLVQLTERLRSAVPVIAQQAEASRDRLSHFPGQAHRQAPPLG</sequence>
<protein>
    <recommendedName>
        <fullName evidence="1">NAD(P)H-quinone oxidoreductase chain 4 2</fullName>
        <ecNumber evidence="1">7.1.1.-</ecNumber>
    </recommendedName>
    <alternativeName>
        <fullName evidence="1">NAD(P)H dehydrogenase I, chain 4 2</fullName>
    </alternativeName>
    <alternativeName>
        <fullName evidence="1">NDH-1, chain 4 2</fullName>
    </alternativeName>
</protein>
<organism>
    <name type="scientific">Synechococcus sp. (strain ATCC 27144 / PCC 6301 / SAUG 1402/1)</name>
    <name type="common">Anacystis nidulans</name>
    <dbReference type="NCBI Taxonomy" id="269084"/>
    <lineage>
        <taxon>Bacteria</taxon>
        <taxon>Bacillati</taxon>
        <taxon>Cyanobacteriota</taxon>
        <taxon>Cyanophyceae</taxon>
        <taxon>Synechococcales</taxon>
        <taxon>Synechococcaceae</taxon>
        <taxon>Synechococcus</taxon>
    </lineage>
</organism>
<proteinExistence type="inferred from homology"/>
<gene>
    <name evidence="1" type="primary">ndhD2</name>
    <name type="ordered locus">syc2120_d</name>
</gene>
<reference key="1">
    <citation type="journal article" date="2007" name="Photosyn. Res.">
        <title>Complete nucleotide sequence of the freshwater unicellular cyanobacterium Synechococcus elongatus PCC 6301 chromosome: gene content and organization.</title>
        <authorList>
            <person name="Sugita C."/>
            <person name="Ogata K."/>
            <person name="Shikata M."/>
            <person name="Jikuya H."/>
            <person name="Takano J."/>
            <person name="Furumichi M."/>
            <person name="Kanehisa M."/>
            <person name="Omata T."/>
            <person name="Sugiura M."/>
            <person name="Sugita M."/>
        </authorList>
    </citation>
    <scope>NUCLEOTIDE SEQUENCE [LARGE SCALE GENOMIC DNA]</scope>
    <source>
        <strain>ATCC 27144 / PCC 6301 / SAUG 1402/1</strain>
    </source>
</reference>
<evidence type="ECO:0000255" key="1">
    <source>
        <dbReference type="HAMAP-Rule" id="MF_00491"/>
    </source>
</evidence>
<name>NU4C2_SYNP6</name>
<dbReference type="EC" id="7.1.1.-" evidence="1"/>
<dbReference type="EMBL" id="AP008231">
    <property type="protein sequence ID" value="BAD80310.1"/>
    <property type="molecule type" value="Genomic_DNA"/>
</dbReference>
<dbReference type="SMR" id="Q5N060"/>
<dbReference type="KEGG" id="syc:syc2120_d"/>
<dbReference type="eggNOG" id="COG1008">
    <property type="taxonomic scope" value="Bacteria"/>
</dbReference>
<dbReference type="Proteomes" id="UP000001175">
    <property type="component" value="Chromosome"/>
</dbReference>
<dbReference type="GO" id="GO:0031676">
    <property type="term" value="C:plasma membrane-derived thylakoid membrane"/>
    <property type="evidence" value="ECO:0007669"/>
    <property type="project" value="UniProtKB-SubCell"/>
</dbReference>
<dbReference type="GO" id="GO:0008137">
    <property type="term" value="F:NADH dehydrogenase (ubiquinone) activity"/>
    <property type="evidence" value="ECO:0007669"/>
    <property type="project" value="InterPro"/>
</dbReference>
<dbReference type="GO" id="GO:0048039">
    <property type="term" value="F:ubiquinone binding"/>
    <property type="evidence" value="ECO:0007669"/>
    <property type="project" value="TreeGrafter"/>
</dbReference>
<dbReference type="GO" id="GO:0042773">
    <property type="term" value="P:ATP synthesis coupled electron transport"/>
    <property type="evidence" value="ECO:0007669"/>
    <property type="project" value="InterPro"/>
</dbReference>
<dbReference type="GO" id="GO:0015990">
    <property type="term" value="P:electron transport coupled proton transport"/>
    <property type="evidence" value="ECO:0007669"/>
    <property type="project" value="TreeGrafter"/>
</dbReference>
<dbReference type="HAMAP" id="MF_00491">
    <property type="entry name" value="NDH1_NuoM"/>
    <property type="match status" value="1"/>
</dbReference>
<dbReference type="InterPro" id="IPR022997">
    <property type="entry name" value="NADH_Q_OxRdtase_chain4"/>
</dbReference>
<dbReference type="InterPro" id="IPR010227">
    <property type="entry name" value="NADH_Q_OxRdtase_chainM/4"/>
</dbReference>
<dbReference type="InterPro" id="IPR003918">
    <property type="entry name" value="NADH_UbQ_OxRdtase"/>
</dbReference>
<dbReference type="InterPro" id="IPR001750">
    <property type="entry name" value="ND/Mrp_TM"/>
</dbReference>
<dbReference type="NCBIfam" id="TIGR01972">
    <property type="entry name" value="NDH_I_M"/>
    <property type="match status" value="1"/>
</dbReference>
<dbReference type="NCBIfam" id="NF002713">
    <property type="entry name" value="PRK02546.1"/>
    <property type="match status" value="1"/>
</dbReference>
<dbReference type="NCBIfam" id="NF009212">
    <property type="entry name" value="PRK12561.1"/>
    <property type="match status" value="1"/>
</dbReference>
<dbReference type="PANTHER" id="PTHR43507:SF21">
    <property type="entry name" value="NAD(P)H-QUINONE OXIDOREDUCTASE CHAIN 4, CHLOROPLASTIC"/>
    <property type="match status" value="1"/>
</dbReference>
<dbReference type="PANTHER" id="PTHR43507">
    <property type="entry name" value="NADH-UBIQUINONE OXIDOREDUCTASE CHAIN 4"/>
    <property type="match status" value="1"/>
</dbReference>
<dbReference type="Pfam" id="PF00361">
    <property type="entry name" value="Proton_antipo_M"/>
    <property type="match status" value="1"/>
</dbReference>
<dbReference type="PRINTS" id="PR01437">
    <property type="entry name" value="NUOXDRDTASE4"/>
</dbReference>
<accession>Q5N060</accession>
<keyword id="KW-0472">Membrane</keyword>
<keyword id="KW-0520">NAD</keyword>
<keyword id="KW-0521">NADP</keyword>
<keyword id="KW-0618">Plastoquinone</keyword>
<keyword id="KW-0874">Quinone</keyword>
<keyword id="KW-0793">Thylakoid</keyword>
<keyword id="KW-1278">Translocase</keyword>
<keyword id="KW-0812">Transmembrane</keyword>
<keyword id="KW-1133">Transmembrane helix</keyword>
<feature type="chain" id="PRO_0000343247" description="NAD(P)H-quinone oxidoreductase chain 4 2">
    <location>
        <begin position="1"/>
        <end position="534"/>
    </location>
</feature>
<feature type="transmembrane region" description="Helical" evidence="1">
    <location>
        <begin position="6"/>
        <end position="26"/>
    </location>
</feature>
<feature type="transmembrane region" description="Helical" evidence="1">
    <location>
        <begin position="38"/>
        <end position="58"/>
    </location>
</feature>
<feature type="transmembrane region" description="Helical" evidence="1">
    <location>
        <begin position="93"/>
        <end position="113"/>
    </location>
</feature>
<feature type="transmembrane region" description="Helical" evidence="1">
    <location>
        <begin position="117"/>
        <end position="137"/>
    </location>
</feature>
<feature type="transmembrane region" description="Helical" evidence="1">
    <location>
        <begin position="138"/>
        <end position="158"/>
    </location>
</feature>
<feature type="transmembrane region" description="Helical" evidence="1">
    <location>
        <begin position="171"/>
        <end position="191"/>
    </location>
</feature>
<feature type="transmembrane region" description="Helical" evidence="1">
    <location>
        <begin position="210"/>
        <end position="230"/>
    </location>
</feature>
<feature type="transmembrane region" description="Helical" evidence="1">
    <location>
        <begin position="245"/>
        <end position="265"/>
    </location>
</feature>
<feature type="transmembrane region" description="Helical" evidence="1">
    <location>
        <begin position="279"/>
        <end position="299"/>
    </location>
</feature>
<feature type="transmembrane region" description="Helical" evidence="1">
    <location>
        <begin position="313"/>
        <end position="333"/>
    </location>
</feature>
<feature type="transmembrane region" description="Helical" evidence="1">
    <location>
        <begin position="335"/>
        <end position="355"/>
    </location>
</feature>
<feature type="transmembrane region" description="Helical" evidence="1">
    <location>
        <begin position="377"/>
        <end position="399"/>
    </location>
</feature>
<feature type="transmembrane region" description="Helical" evidence="1">
    <location>
        <begin position="419"/>
        <end position="439"/>
    </location>
</feature>